<proteinExistence type="evidence at protein level"/>
<sequence>MDSTVPSALELPQRLALNPRESPRSPEEEEPHLLSSLAAVQTLASVIRPCYGPHGRQKFLVTMKGETVCTGCATAILRALELEHPAAWLLREAGQTQAENSGDGTAFVVLLTEALLEQAEQLLKAGLPRPQLREAYATATAEVLATLPSLAIQSLGPLEDPSWALHSVMNTHTLSPMDHLTKLVAHACWAIKELDGSFKPERVGVCALPGGTLEDSCLLPGLAISGKLCGQMATVLSGARVALFACPFGPAHPNAPATARLSSPADLAQFSKGSDQLLEKQVGQLAAAGINVAVVLGEVDEETLTLADKYGIVVIQARSWMEIIYLSEVLDTPLLPRLLPPQRPGKCQRVYRQELGDGLAVVFEWECTGTPALTVVLRGATTQGLRSAEQAVYHGIDAYFQLCQDPRLIPGAGATEMALAKMLSDKGSRLEGPSGPAFLAFAWALKYLPKTLAENAGLAVSDVMAEMSGVHQGGNLLMGVGTEGIINVAQEGVWDTLIVKAQGFRAVAEVVLQLVTVDEIVVAKKSPTHQEIWNPDSKKTKKHPPPVETKKILGLNN</sequence>
<name>TCPQM_HUMAN</name>
<keyword id="KW-0067">ATP-binding</keyword>
<keyword id="KW-0143">Chaperone</keyword>
<keyword id="KW-0963">Cytoplasm</keyword>
<keyword id="KW-0547">Nucleotide-binding</keyword>
<keyword id="KW-1267">Proteomics identification</keyword>
<keyword id="KW-1185">Reference proteome</keyword>
<reference key="1">
    <citation type="journal article" date="1999" name="Genomics">
        <title>Identification of a putative regulatory subunit of a calcium-activated potassium channel in the dup(3q) syndrome region and a related sequence on 22q11.2.</title>
        <authorList>
            <person name="Riazi M.A."/>
            <person name="Brinkman-Mills P."/>
            <person name="Johnson A."/>
            <person name="Naylor S.L."/>
            <person name="Minoshima S."/>
            <person name="Shimizu N."/>
            <person name="Baldini A."/>
            <person name="McDermid H.E."/>
        </authorList>
    </citation>
    <scope>NUCLEOTIDE SEQUENCE [GENOMIC DNA]</scope>
    <scope>VARIANT ARG-320</scope>
</reference>
<reference key="2">
    <citation type="journal article" date="2004" name="Genome Biol.">
        <title>A genome annotation-driven approach to cloning the human ORFeome.</title>
        <authorList>
            <person name="Collins J.E."/>
            <person name="Wright C.L."/>
            <person name="Edwards C.A."/>
            <person name="Davis M.P."/>
            <person name="Grinham J.A."/>
            <person name="Cole C.G."/>
            <person name="Goward M.E."/>
            <person name="Aguado B."/>
            <person name="Mallya M."/>
            <person name="Mokrab Y."/>
            <person name="Huckle E.J."/>
            <person name="Beare D.M."/>
            <person name="Dunham I."/>
        </authorList>
    </citation>
    <scope>NUCLEOTIDE SEQUENCE [LARGE SCALE MRNA]</scope>
    <scope>VARIANT ARG-320</scope>
</reference>
<reference key="3">
    <citation type="journal article" date="1999" name="Nature">
        <title>The DNA sequence of human chromosome 22.</title>
        <authorList>
            <person name="Dunham I."/>
            <person name="Hunt A.R."/>
            <person name="Collins J.E."/>
            <person name="Bruskiewich R."/>
            <person name="Beare D.M."/>
            <person name="Clamp M."/>
            <person name="Smink L.J."/>
            <person name="Ainscough R."/>
            <person name="Almeida J.P."/>
            <person name="Babbage A.K."/>
            <person name="Bagguley C."/>
            <person name="Bailey J."/>
            <person name="Barlow K.F."/>
            <person name="Bates K.N."/>
            <person name="Beasley O.P."/>
            <person name="Bird C.P."/>
            <person name="Blakey S.E."/>
            <person name="Bridgeman A.M."/>
            <person name="Buck D."/>
            <person name="Burgess J."/>
            <person name="Burrill W.D."/>
            <person name="Burton J."/>
            <person name="Carder C."/>
            <person name="Carter N.P."/>
            <person name="Chen Y."/>
            <person name="Clark G."/>
            <person name="Clegg S.M."/>
            <person name="Cobley V.E."/>
            <person name="Cole C.G."/>
            <person name="Collier R.E."/>
            <person name="Connor R."/>
            <person name="Conroy D."/>
            <person name="Corby N.R."/>
            <person name="Coville G.J."/>
            <person name="Cox A.V."/>
            <person name="Davis J."/>
            <person name="Dawson E."/>
            <person name="Dhami P.D."/>
            <person name="Dockree C."/>
            <person name="Dodsworth S.J."/>
            <person name="Durbin R.M."/>
            <person name="Ellington A.G."/>
            <person name="Evans K.L."/>
            <person name="Fey J.M."/>
            <person name="Fleming K."/>
            <person name="French L."/>
            <person name="Garner A.A."/>
            <person name="Gilbert J.G.R."/>
            <person name="Goward M.E."/>
            <person name="Grafham D.V."/>
            <person name="Griffiths M.N.D."/>
            <person name="Hall C."/>
            <person name="Hall R.E."/>
            <person name="Hall-Tamlyn G."/>
            <person name="Heathcott R.W."/>
            <person name="Ho S."/>
            <person name="Holmes S."/>
            <person name="Hunt S.E."/>
            <person name="Jones M.C."/>
            <person name="Kershaw J."/>
            <person name="Kimberley A.M."/>
            <person name="King A."/>
            <person name="Laird G.K."/>
            <person name="Langford C.F."/>
            <person name="Leversha M.A."/>
            <person name="Lloyd C."/>
            <person name="Lloyd D.M."/>
            <person name="Martyn I.D."/>
            <person name="Mashreghi-Mohammadi M."/>
            <person name="Matthews L.H."/>
            <person name="Mccann O.T."/>
            <person name="Mcclay J."/>
            <person name="Mclaren S."/>
            <person name="McMurray A.A."/>
            <person name="Milne S.A."/>
            <person name="Mortimore B.J."/>
            <person name="Odell C.N."/>
            <person name="Pavitt R."/>
            <person name="Pearce A.V."/>
            <person name="Pearson D."/>
            <person name="Phillimore B.J.C.T."/>
            <person name="Phillips S.H."/>
            <person name="Plumb R.W."/>
            <person name="Ramsay H."/>
            <person name="Ramsey Y."/>
            <person name="Rogers L."/>
            <person name="Ross M.T."/>
            <person name="Scott C.E."/>
            <person name="Sehra H.K."/>
            <person name="Skuce C.D."/>
            <person name="Smalley S."/>
            <person name="Smith M.L."/>
            <person name="Soderlund C."/>
            <person name="Spragon L."/>
            <person name="Steward C.A."/>
            <person name="Sulston J.E."/>
            <person name="Swann R.M."/>
            <person name="Vaudin M."/>
            <person name="Wall M."/>
            <person name="Wallis J.M."/>
            <person name="Whiteley M.N."/>
            <person name="Willey D.L."/>
            <person name="Williams L."/>
            <person name="Williams S.A."/>
            <person name="Williamson H."/>
            <person name="Wilmer T.E."/>
            <person name="Wilming L."/>
            <person name="Wright C.L."/>
            <person name="Hubbard T."/>
            <person name="Bentley D.R."/>
            <person name="Beck S."/>
            <person name="Rogers J."/>
            <person name="Shimizu N."/>
            <person name="Minoshima S."/>
            <person name="Kawasaki K."/>
            <person name="Sasaki T."/>
            <person name="Asakawa S."/>
            <person name="Kudoh J."/>
            <person name="Shintani A."/>
            <person name="Shibuya K."/>
            <person name="Yoshizaki Y."/>
            <person name="Aoki N."/>
            <person name="Mitsuyama S."/>
            <person name="Roe B.A."/>
            <person name="Chen F."/>
            <person name="Chu L."/>
            <person name="Crabtree J."/>
            <person name="Deschamps S."/>
            <person name="Do A."/>
            <person name="Do T."/>
            <person name="Dorman A."/>
            <person name="Fang F."/>
            <person name="Fu Y."/>
            <person name="Hu P."/>
            <person name="Hua A."/>
            <person name="Kenton S."/>
            <person name="Lai H."/>
            <person name="Lao H.I."/>
            <person name="Lewis J."/>
            <person name="Lewis S."/>
            <person name="Lin S.-P."/>
            <person name="Loh P."/>
            <person name="Malaj E."/>
            <person name="Nguyen T."/>
            <person name="Pan H."/>
            <person name="Phan S."/>
            <person name="Qi S."/>
            <person name="Qian Y."/>
            <person name="Ray L."/>
            <person name="Ren Q."/>
            <person name="Shaull S."/>
            <person name="Sloan D."/>
            <person name="Song L."/>
            <person name="Wang Q."/>
            <person name="Wang Y."/>
            <person name="Wang Z."/>
            <person name="White J."/>
            <person name="Willingham D."/>
            <person name="Wu H."/>
            <person name="Yao Z."/>
            <person name="Zhan M."/>
            <person name="Zhang G."/>
            <person name="Chissoe S."/>
            <person name="Murray J."/>
            <person name="Miller N."/>
            <person name="Minx P."/>
            <person name="Fulton R."/>
            <person name="Johnson D."/>
            <person name="Bemis G."/>
            <person name="Bentley D."/>
            <person name="Bradshaw H."/>
            <person name="Bourne S."/>
            <person name="Cordes M."/>
            <person name="Du Z."/>
            <person name="Fulton L."/>
            <person name="Goela D."/>
            <person name="Graves T."/>
            <person name="Hawkins J."/>
            <person name="Hinds K."/>
            <person name="Kemp K."/>
            <person name="Latreille P."/>
            <person name="Layman D."/>
            <person name="Ozersky P."/>
            <person name="Rohlfing T."/>
            <person name="Scheet P."/>
            <person name="Walker C."/>
            <person name="Wamsley A."/>
            <person name="Wohldmann P."/>
            <person name="Pepin K."/>
            <person name="Nelson J."/>
            <person name="Korf I."/>
            <person name="Bedell J.A."/>
            <person name="Hillier L.W."/>
            <person name="Mardis E."/>
            <person name="Waterston R."/>
            <person name="Wilson R."/>
            <person name="Emanuel B.S."/>
            <person name="Shaikh T."/>
            <person name="Kurahashi H."/>
            <person name="Saitta S."/>
            <person name="Budarf M.L."/>
            <person name="McDermid H.E."/>
            <person name="Johnson A."/>
            <person name="Wong A.C.C."/>
            <person name="Morrow B.E."/>
            <person name="Edelmann L."/>
            <person name="Kim U.J."/>
            <person name="Shizuya H."/>
            <person name="Simon M.I."/>
            <person name="Dumanski J.P."/>
            <person name="Peyrard M."/>
            <person name="Kedra D."/>
            <person name="Seroussi E."/>
            <person name="Fransson I."/>
            <person name="Tapia I."/>
            <person name="Bruder C.E."/>
            <person name="O'Brien K.P."/>
            <person name="Wilkinson P."/>
            <person name="Bodenteich A."/>
            <person name="Hartman K."/>
            <person name="Hu X."/>
            <person name="Khan A.S."/>
            <person name="Lane L."/>
            <person name="Tilahun Y."/>
            <person name="Wright H."/>
        </authorList>
    </citation>
    <scope>NUCLEOTIDE SEQUENCE [LARGE SCALE GENOMIC DNA]</scope>
</reference>
<reference key="4">
    <citation type="submission" date="2005-07" db="EMBL/GenBank/DDBJ databases">
        <authorList>
            <person name="Mural R.J."/>
            <person name="Istrail S."/>
            <person name="Sutton G.G."/>
            <person name="Florea L."/>
            <person name="Halpern A.L."/>
            <person name="Mobarry C.M."/>
            <person name="Lippert R."/>
            <person name="Walenz B."/>
            <person name="Shatkay H."/>
            <person name="Dew I."/>
            <person name="Miller J.R."/>
            <person name="Flanigan M.J."/>
            <person name="Edwards N.J."/>
            <person name="Bolanos R."/>
            <person name="Fasulo D."/>
            <person name="Halldorsson B.V."/>
            <person name="Hannenhalli S."/>
            <person name="Turner R."/>
            <person name="Yooseph S."/>
            <person name="Lu F."/>
            <person name="Nusskern D.R."/>
            <person name="Shue B.C."/>
            <person name="Zheng X.H."/>
            <person name="Zhong F."/>
            <person name="Delcher A.L."/>
            <person name="Huson D.H."/>
            <person name="Kravitz S.A."/>
            <person name="Mouchard L."/>
            <person name="Reinert K."/>
            <person name="Remington K.A."/>
            <person name="Clark A.G."/>
            <person name="Waterman M.S."/>
            <person name="Eichler E.E."/>
            <person name="Adams M.D."/>
            <person name="Hunkapiller M.W."/>
            <person name="Myers E.W."/>
            <person name="Venter J.C."/>
        </authorList>
    </citation>
    <scope>NUCLEOTIDE SEQUENCE [LARGE SCALE GENOMIC DNA]</scope>
    <scope>VARIANT ARG-320</scope>
</reference>
<reference key="5">
    <citation type="journal article" date="2004" name="Genome Res.">
        <title>The status, quality, and expansion of the NIH full-length cDNA project: the Mammalian Gene Collection (MGC).</title>
        <authorList>
            <consortium name="The MGC Project Team"/>
        </authorList>
    </citation>
    <scope>NUCLEOTIDE SEQUENCE [LARGE SCALE MRNA]</scope>
    <scope>VARIANT ARG-320</scope>
    <source>
        <tissue>Brain</tissue>
    </source>
</reference>
<reference key="6">
    <citation type="journal article" date="2010" name="BMC Evol. Biol.">
        <title>Chaperonin genes on the rise: new divergent classes and intense duplication in human and other vertebrate genomes.</title>
        <authorList>
            <person name="Mukherjee K."/>
            <person name="Conway de Macario E."/>
            <person name="Macario A.J."/>
            <person name="Brocchieri L."/>
        </authorList>
    </citation>
    <scope>IDENTIFICATION</scope>
</reference>
<dbReference type="EMBL" id="AP000365">
    <property type="protein sequence ID" value="BAA84680.1"/>
    <property type="molecule type" value="Genomic_DNA"/>
</dbReference>
<dbReference type="EMBL" id="AP003553">
    <property type="protein sequence ID" value="BAB43952.1"/>
    <property type="molecule type" value="Genomic_DNA"/>
</dbReference>
<dbReference type="EMBL" id="CR456508">
    <property type="protein sequence ID" value="CAG30394.1"/>
    <property type="molecule type" value="mRNA"/>
</dbReference>
<dbReference type="EMBL" id="AP000547">
    <property type="status" value="NOT_ANNOTATED_CDS"/>
    <property type="molecule type" value="Genomic_DNA"/>
</dbReference>
<dbReference type="EMBL" id="CH471193">
    <property type="protein sequence ID" value="EAW57714.1"/>
    <property type="molecule type" value="Genomic_DNA"/>
</dbReference>
<dbReference type="EMBL" id="BC033797">
    <property type="protein sequence ID" value="AAH33797.1"/>
    <property type="molecule type" value="mRNA"/>
</dbReference>
<dbReference type="EMBL" id="BC100811">
    <property type="protein sequence ID" value="AAI00812.1"/>
    <property type="molecule type" value="mRNA"/>
</dbReference>
<dbReference type="EMBL" id="BC100812">
    <property type="protein sequence ID" value="AAI00813.1"/>
    <property type="molecule type" value="mRNA"/>
</dbReference>
<dbReference type="EMBL" id="BC100813">
    <property type="protein sequence ID" value="AAI00814.1"/>
    <property type="molecule type" value="mRNA"/>
</dbReference>
<dbReference type="EMBL" id="BC139842">
    <property type="protein sequence ID" value="AAI39843.2"/>
    <property type="status" value="ALT_SEQ"/>
    <property type="molecule type" value="mRNA"/>
</dbReference>
<dbReference type="CCDS" id="CCDS13738.1"/>
<dbReference type="RefSeq" id="NP_055221.1">
    <property type="nucleotide sequence ID" value="NM_014406.5"/>
</dbReference>
<dbReference type="SMR" id="Q96SF2"/>
<dbReference type="BioGRID" id="127265">
    <property type="interactions" value="190"/>
</dbReference>
<dbReference type="FunCoup" id="Q96SF2">
    <property type="interactions" value="17"/>
</dbReference>
<dbReference type="IntAct" id="Q96SF2">
    <property type="interactions" value="157"/>
</dbReference>
<dbReference type="MINT" id="Q96SF2"/>
<dbReference type="STRING" id="9606.ENSP00000353048"/>
<dbReference type="GlyGen" id="Q96SF2">
    <property type="glycosylation" value="1 site, 1 O-linked glycan (1 site)"/>
</dbReference>
<dbReference type="PhosphoSitePlus" id="Q96SF2"/>
<dbReference type="BioMuta" id="CCT8L2"/>
<dbReference type="DMDM" id="313104021"/>
<dbReference type="MassIVE" id="Q96SF2"/>
<dbReference type="PaxDb" id="9606-ENSP00000353048"/>
<dbReference type="PeptideAtlas" id="Q96SF2"/>
<dbReference type="ProteomicsDB" id="78109"/>
<dbReference type="Antibodypedia" id="22616">
    <property type="antibodies" value="430 antibodies from 17 providers"/>
</dbReference>
<dbReference type="DNASU" id="150160"/>
<dbReference type="Ensembl" id="ENST00000359963.4">
    <property type="protein sequence ID" value="ENSP00000353048.3"/>
    <property type="gene ID" value="ENSG00000198445.4"/>
</dbReference>
<dbReference type="GeneID" id="150160"/>
<dbReference type="KEGG" id="hsa:150160"/>
<dbReference type="MANE-Select" id="ENST00000359963.4">
    <property type="protein sequence ID" value="ENSP00000353048.3"/>
    <property type="RefSeq nucleotide sequence ID" value="NM_014406.5"/>
    <property type="RefSeq protein sequence ID" value="NP_055221.1"/>
</dbReference>
<dbReference type="UCSC" id="uc002zlp.2">
    <property type="organism name" value="human"/>
</dbReference>
<dbReference type="AGR" id="HGNC:15553"/>
<dbReference type="CTD" id="150160"/>
<dbReference type="GeneCards" id="CCT8L2"/>
<dbReference type="HGNC" id="HGNC:15553">
    <property type="gene designation" value="CCT8L2"/>
</dbReference>
<dbReference type="HPA" id="ENSG00000198445">
    <property type="expression patterns" value="Tissue enriched (testis)"/>
</dbReference>
<dbReference type="neXtProt" id="NX_Q96SF2"/>
<dbReference type="OpenTargets" id="ENSG00000198445"/>
<dbReference type="PharmGKB" id="PA162382100"/>
<dbReference type="VEuPathDB" id="HostDB:ENSG00000198445"/>
<dbReference type="eggNOG" id="KOG0362">
    <property type="taxonomic scope" value="Eukaryota"/>
</dbReference>
<dbReference type="GeneTree" id="ENSGT00940000163221"/>
<dbReference type="HOGENOM" id="CLU_008891_4_2_1"/>
<dbReference type="InParanoid" id="Q96SF2"/>
<dbReference type="OMA" id="YSVMNTH"/>
<dbReference type="OrthoDB" id="1748577at2759"/>
<dbReference type="PAN-GO" id="Q96SF2">
    <property type="GO annotations" value="3 GO annotations based on evolutionary models"/>
</dbReference>
<dbReference type="PhylomeDB" id="Q96SF2"/>
<dbReference type="TreeFam" id="TF105699"/>
<dbReference type="PathwayCommons" id="Q96SF2"/>
<dbReference type="SignaLink" id="Q96SF2"/>
<dbReference type="BioGRID-ORCS" id="150160">
    <property type="hits" value="21 hits in 1143 CRISPR screens"/>
</dbReference>
<dbReference type="CD-CODE" id="DEE660B4">
    <property type="entry name" value="Stress granule"/>
</dbReference>
<dbReference type="GenomeRNAi" id="150160"/>
<dbReference type="Pharos" id="Q96SF2">
    <property type="development level" value="Tdark"/>
</dbReference>
<dbReference type="PRO" id="PR:Q96SF2"/>
<dbReference type="Proteomes" id="UP000005640">
    <property type="component" value="Chromosome 22"/>
</dbReference>
<dbReference type="RNAct" id="Q96SF2">
    <property type="molecule type" value="protein"/>
</dbReference>
<dbReference type="Bgee" id="ENSG00000198445">
    <property type="expression patterns" value="Expressed in male germ line stem cell (sensu Vertebrata) in testis and 18 other cell types or tissues"/>
</dbReference>
<dbReference type="GO" id="GO:0005832">
    <property type="term" value="C:chaperonin-containing T-complex"/>
    <property type="evidence" value="ECO:0000318"/>
    <property type="project" value="GO_Central"/>
</dbReference>
<dbReference type="GO" id="GO:0005524">
    <property type="term" value="F:ATP binding"/>
    <property type="evidence" value="ECO:0007669"/>
    <property type="project" value="UniProtKB-KW"/>
</dbReference>
<dbReference type="GO" id="GO:0140662">
    <property type="term" value="F:ATP-dependent protein folding chaperone"/>
    <property type="evidence" value="ECO:0007669"/>
    <property type="project" value="InterPro"/>
</dbReference>
<dbReference type="GO" id="GO:0015269">
    <property type="term" value="F:calcium-activated potassium channel activity"/>
    <property type="evidence" value="ECO:0000304"/>
    <property type="project" value="ProtInc"/>
</dbReference>
<dbReference type="GO" id="GO:0005253">
    <property type="term" value="F:monoatomic anion channel activity"/>
    <property type="evidence" value="ECO:0000304"/>
    <property type="project" value="ProtInc"/>
</dbReference>
<dbReference type="GO" id="GO:0051082">
    <property type="term" value="F:unfolded protein binding"/>
    <property type="evidence" value="ECO:0000318"/>
    <property type="project" value="GO_Central"/>
</dbReference>
<dbReference type="GO" id="GO:0006457">
    <property type="term" value="P:protein folding"/>
    <property type="evidence" value="ECO:0000318"/>
    <property type="project" value="GO_Central"/>
</dbReference>
<dbReference type="FunFam" id="3.50.7.10:FF:000008">
    <property type="entry name" value="T-complex protein 1 subunit theta"/>
    <property type="match status" value="1"/>
</dbReference>
<dbReference type="Gene3D" id="3.50.7.10">
    <property type="entry name" value="GroEL"/>
    <property type="match status" value="1"/>
</dbReference>
<dbReference type="Gene3D" id="1.10.560.10">
    <property type="entry name" value="GroEL-like equatorial domain"/>
    <property type="match status" value="1"/>
</dbReference>
<dbReference type="Gene3D" id="3.30.260.10">
    <property type="entry name" value="TCP-1-like chaperonin intermediate domain"/>
    <property type="match status" value="1"/>
</dbReference>
<dbReference type="InterPro" id="IPR017998">
    <property type="entry name" value="Chaperone_TCP-1"/>
</dbReference>
<dbReference type="InterPro" id="IPR002423">
    <property type="entry name" value="Cpn60/GroEL/TCP-1"/>
</dbReference>
<dbReference type="InterPro" id="IPR027409">
    <property type="entry name" value="GroEL-like_apical_dom_sf"/>
</dbReference>
<dbReference type="InterPro" id="IPR027413">
    <property type="entry name" value="GROEL-like_equatorial_sf"/>
</dbReference>
<dbReference type="InterPro" id="IPR027410">
    <property type="entry name" value="TCP-1-like_intermed_sf"/>
</dbReference>
<dbReference type="PANTHER" id="PTHR11353">
    <property type="entry name" value="CHAPERONIN"/>
    <property type="match status" value="1"/>
</dbReference>
<dbReference type="Pfam" id="PF00118">
    <property type="entry name" value="Cpn60_TCP1"/>
    <property type="match status" value="1"/>
</dbReference>
<dbReference type="PRINTS" id="PR00304">
    <property type="entry name" value="TCOMPLEXTCP1"/>
</dbReference>
<dbReference type="SUPFAM" id="SSF52029">
    <property type="entry name" value="GroEL apical domain-like"/>
    <property type="match status" value="1"/>
</dbReference>
<dbReference type="SUPFAM" id="SSF48592">
    <property type="entry name" value="GroEL equatorial domain-like"/>
    <property type="match status" value="1"/>
</dbReference>
<dbReference type="SUPFAM" id="SSF54849">
    <property type="entry name" value="GroEL-intermediate domain like"/>
    <property type="match status" value="1"/>
</dbReference>
<protein>
    <recommendedName>
        <fullName>T-complex protein 1 subunit theta-like 2</fullName>
    </recommendedName>
    <alternativeName>
        <fullName>Chaperonin containing T-complex polypeptide 1 subunit 8-like 2</fullName>
    </alternativeName>
</protein>
<feature type="chain" id="PRO_0000347339" description="T-complex protein 1 subunit theta-like 2">
    <location>
        <begin position="1"/>
        <end position="557"/>
    </location>
</feature>
<feature type="region of interest" description="Disordered" evidence="2">
    <location>
        <begin position="1"/>
        <end position="33"/>
    </location>
</feature>
<feature type="region of interest" description="Disordered" evidence="2">
    <location>
        <begin position="531"/>
        <end position="557"/>
    </location>
</feature>
<feature type="sequence variant" id="VAR_046042" description="In dbSNP:rs2236639." evidence="3 4 5 6">
    <original>W</original>
    <variation>R</variation>
    <location>
        <position position="320"/>
    </location>
</feature>
<comment type="function">
    <text evidence="1">Possible molecular chaperone; assists the folding of proteins upon ATP hydrolysis.</text>
</comment>
<comment type="subcellular location">
    <subcellularLocation>
        <location evidence="1">Cytoplasm</location>
    </subcellularLocation>
</comment>
<comment type="miscellaneous">
    <text evidence="7">Presence of two highly similar CCT8L genes (CCT8L1P and CCT8L2) in the genomes of human and chimp and of a single copy in other mammal genomes, including rhesus monkey, suggests that the duplication of this gene occurred in the ape lineage (Hominoidea) after its divergence from the old-world monkeys (Cercopithecidae).</text>
</comment>
<comment type="miscellaneous">
    <text evidence="9">Expression of CCT8L2 is confirmed by many ESTs mostly identified from the testis.</text>
</comment>
<comment type="similarity">
    <text evidence="8">Belongs to the TCP-1 chaperonin family.</text>
</comment>
<comment type="sequence caution" evidence="8">
    <conflict type="miscellaneous discrepancy">
        <sequence resource="EMBL-CDS" id="AAI39843"/>
    </conflict>
    <text>Contaminating sequence. Sequence of unknown origin in the C-terminal part.</text>
</comment>
<evidence type="ECO:0000250" key="1">
    <source>
        <dbReference type="UniProtKB" id="P40227"/>
    </source>
</evidence>
<evidence type="ECO:0000256" key="2">
    <source>
        <dbReference type="SAM" id="MobiDB-lite"/>
    </source>
</evidence>
<evidence type="ECO:0000269" key="3">
    <source>
    </source>
</evidence>
<evidence type="ECO:0000269" key="4">
    <source>
    </source>
</evidence>
<evidence type="ECO:0000269" key="5">
    <source>
    </source>
</evidence>
<evidence type="ECO:0000269" key="6">
    <source ref="4"/>
</evidence>
<evidence type="ECO:0000303" key="7">
    <source>
    </source>
</evidence>
<evidence type="ECO:0000305" key="8"/>
<evidence type="ECO:0000305" key="9">
    <source>
    </source>
</evidence>
<organism>
    <name type="scientific">Homo sapiens</name>
    <name type="common">Human</name>
    <dbReference type="NCBI Taxonomy" id="9606"/>
    <lineage>
        <taxon>Eukaryota</taxon>
        <taxon>Metazoa</taxon>
        <taxon>Chordata</taxon>
        <taxon>Craniata</taxon>
        <taxon>Vertebrata</taxon>
        <taxon>Euteleostomi</taxon>
        <taxon>Mammalia</taxon>
        <taxon>Eutheria</taxon>
        <taxon>Euarchontoglires</taxon>
        <taxon>Primates</taxon>
        <taxon>Haplorrhini</taxon>
        <taxon>Catarrhini</taxon>
        <taxon>Hominidae</taxon>
        <taxon>Homo</taxon>
    </lineage>
</organism>
<accession>Q96SF2</accession>
<accession>A4QPH3</accession>
<accession>Q9UJS3</accession>
<gene>
    <name type="primary">CCT8L2</name>
    <name type="synonym">CESK1</name>
</gene>